<proteinExistence type="inferred from homology"/>
<name>VF165_ASFWA</name>
<evidence type="ECO:0000255" key="1"/>
<evidence type="ECO:0000305" key="2"/>
<gene>
    <name type="ordered locus">War-056</name>
</gene>
<protein>
    <recommendedName>
        <fullName>Uncharacterized protein F165R</fullName>
        <shortName>pF165R</shortName>
    </recommendedName>
</protein>
<reference key="1">
    <citation type="submission" date="2003-03" db="EMBL/GenBank/DDBJ databases">
        <title>African swine fever virus genomes.</title>
        <authorList>
            <person name="Kutish G.F."/>
            <person name="Rock D.L."/>
        </authorList>
    </citation>
    <scope>NUCLEOTIDE SEQUENCE [LARGE SCALE GENOMIC DNA]</scope>
</reference>
<accession>P0CA69</accession>
<organismHost>
    <name type="scientific">Ornithodoros</name>
    <name type="common">relapsing fever ticks</name>
    <dbReference type="NCBI Taxonomy" id="6937"/>
</organismHost>
<organismHost>
    <name type="scientific">Phacochoerus aethiopicus</name>
    <name type="common">Warthog</name>
    <dbReference type="NCBI Taxonomy" id="85517"/>
</organismHost>
<organismHost>
    <name type="scientific">Phacochoerus africanus</name>
    <name type="common">Warthog</name>
    <dbReference type="NCBI Taxonomy" id="41426"/>
</organismHost>
<organismHost>
    <name type="scientific">Potamochoerus larvatus</name>
    <name type="common">Bushpig</name>
    <dbReference type="NCBI Taxonomy" id="273792"/>
</organismHost>
<organismHost>
    <name type="scientific">Sus scrofa</name>
    <name type="common">Pig</name>
    <dbReference type="NCBI Taxonomy" id="9823"/>
</organismHost>
<comment type="subcellular location">
    <subcellularLocation>
        <location evidence="2">Host membrane</location>
        <topology evidence="2">Single-pass membrane protein</topology>
    </subcellularLocation>
</comment>
<comment type="induction">
    <text evidence="2">Expressed in the late phase of the viral replicative cycle.</text>
</comment>
<comment type="similarity">
    <text evidence="2">Belongs to the asfivirus F165R family.</text>
</comment>
<sequence length="165" mass="19008">MANPNKRIMNKKSKQASISSILNFFFFYIMEYFVAVDNETSLGVFTSIEQCEETMKQYPGLHYVVFKYTCPADAENTDVVYLIPSLTLHTPMFVDHCPNRTKQARHVLKKINLVFEEESIENWKVSVNTVFPHVHNRLSAPKLSIDEANEAVEKFLIQAGRLMSL</sequence>
<feature type="chain" id="PRO_0000373547" description="Uncharacterized protein F165R">
    <location>
        <begin position="1"/>
        <end position="165"/>
    </location>
</feature>
<feature type="transmembrane region" description="Helical" evidence="1">
    <location>
        <begin position="16"/>
        <end position="36"/>
    </location>
</feature>
<keyword id="KW-1043">Host membrane</keyword>
<keyword id="KW-0426">Late protein</keyword>
<keyword id="KW-0472">Membrane</keyword>
<keyword id="KW-0812">Transmembrane</keyword>
<keyword id="KW-1133">Transmembrane helix</keyword>
<organism>
    <name type="scientific">African swine fever virus (isolate Warthog/Namibia/Wart80/1980)</name>
    <name type="common">ASFV</name>
    <dbReference type="NCBI Taxonomy" id="561444"/>
    <lineage>
        <taxon>Viruses</taxon>
        <taxon>Varidnaviria</taxon>
        <taxon>Bamfordvirae</taxon>
        <taxon>Nucleocytoviricota</taxon>
        <taxon>Pokkesviricetes</taxon>
        <taxon>Asfuvirales</taxon>
        <taxon>Asfarviridae</taxon>
        <taxon>Asfivirus</taxon>
        <taxon>African swine fever virus</taxon>
    </lineage>
</organism>
<dbReference type="EMBL" id="AY261366">
    <property type="status" value="NOT_ANNOTATED_CDS"/>
    <property type="molecule type" value="Genomic_DNA"/>
</dbReference>
<dbReference type="Proteomes" id="UP000000858">
    <property type="component" value="Segment"/>
</dbReference>
<dbReference type="GO" id="GO:0033644">
    <property type="term" value="C:host cell membrane"/>
    <property type="evidence" value="ECO:0007669"/>
    <property type="project" value="UniProtKB-SubCell"/>
</dbReference>
<dbReference type="GO" id="GO:0016020">
    <property type="term" value="C:membrane"/>
    <property type="evidence" value="ECO:0007669"/>
    <property type="project" value="UniProtKB-KW"/>
</dbReference>